<reference key="1">
    <citation type="submission" date="2003-03" db="EMBL/GenBank/DDBJ databases">
        <title>African swine fever virus genomes.</title>
        <authorList>
            <person name="Kutish G.F."/>
            <person name="Rock D.L."/>
        </authorList>
    </citation>
    <scope>NUCLEOTIDE SEQUENCE [GENOMIC DNA]</scope>
</reference>
<feature type="chain" id="PRO_0000373408" description="Phosphoprotein p30">
    <location>
        <begin position="1"/>
        <end position="186"/>
    </location>
</feature>
<keyword id="KW-0244">Early protein</keyword>
<keyword id="KW-1035">Host cytoplasm</keyword>
<keyword id="KW-1048">Host nucleus</keyword>
<keyword id="KW-0945">Host-virus interaction</keyword>
<keyword id="KW-0597">Phosphoprotein</keyword>
<keyword id="KW-0946">Virion</keyword>
<evidence type="ECO:0000250" key="1"/>
<evidence type="ECO:0000250" key="2">
    <source>
        <dbReference type="UniProtKB" id="P34204"/>
    </source>
</evidence>
<evidence type="ECO:0000305" key="3"/>
<proteinExistence type="inferred from homology"/>
<organism>
    <name type="scientific">African swine fever virus (isolate Tick/South Africa/Pretoriuskop Pr4/1996)</name>
    <name type="common">ASFV</name>
    <dbReference type="NCBI Taxonomy" id="561443"/>
    <lineage>
        <taxon>Viruses</taxon>
        <taxon>Varidnaviria</taxon>
        <taxon>Bamfordvirae</taxon>
        <taxon>Nucleocytoviricota</taxon>
        <taxon>Pokkesviricetes</taxon>
        <taxon>Asfuvirales</taxon>
        <taxon>Asfarviridae</taxon>
        <taxon>Asfivirus</taxon>
        <taxon>African swine fever virus</taxon>
    </lineage>
</organism>
<dbReference type="EMBL" id="AY261363">
    <property type="status" value="NOT_ANNOTATED_CDS"/>
    <property type="molecule type" value="Genomic_DNA"/>
</dbReference>
<dbReference type="SMR" id="P0C9Z3"/>
<dbReference type="Proteomes" id="UP000000859">
    <property type="component" value="Segment"/>
</dbReference>
<dbReference type="GO" id="GO:0030430">
    <property type="term" value="C:host cell cytoplasm"/>
    <property type="evidence" value="ECO:0007669"/>
    <property type="project" value="UniProtKB-SubCell"/>
</dbReference>
<dbReference type="GO" id="GO:0042025">
    <property type="term" value="C:host cell nucleus"/>
    <property type="evidence" value="ECO:0007669"/>
    <property type="project" value="UniProtKB-SubCell"/>
</dbReference>
<dbReference type="GO" id="GO:0044423">
    <property type="term" value="C:virion component"/>
    <property type="evidence" value="ECO:0007669"/>
    <property type="project" value="UniProtKB-KW"/>
</dbReference>
<sequence length="186" mass="21331">MKMEVIFKTDLRSSSQVVFHAGSLYNWFSVEIINSGRIVTTAIKTLLSTVKYDIVKSARIYAGQGYTEHQAQEEWNMILHVLFEEETESSASSESIHEKNDNGTNECTSSFETLFEQEPSSEVPKDSKLYMLAQKTVQHIEQYGKAPDFNKVIRAHNFIQTIHGTPLKEEEKEVVRLMVIKLLKKK</sequence>
<comment type="function">
    <text evidence="2">Modifies the subcellular distribution of heterogeneous nuclear ribonucleoprotein K (HNRNPK) and may contribute to modulate HNRNPK functions related to processing and export of mRNAs during ASFV infection (By similarity). Necessary for virus internalization (By similarity).</text>
</comment>
<comment type="subunit">
    <text evidence="2">Oligomer. Interacts with host HNRNPK.</text>
</comment>
<comment type="subcellular location">
    <subcellularLocation>
        <location evidence="2">Host cytoplasm</location>
    </subcellularLocation>
    <subcellularLocation>
        <location evidence="2">Host nucleus</location>
    </subcellularLocation>
    <subcellularLocation>
        <location evidence="2">Virion</location>
    </subcellularLocation>
</comment>
<comment type="induction">
    <text evidence="3">Expressed in the early phase of the viral replicative cycle.</text>
</comment>
<comment type="PTM">
    <text evidence="1">Phosphorylated on serine residues in the 115 N-terminal amino acids.</text>
</comment>
<comment type="similarity">
    <text evidence="3">Belongs to the asfivirus phosphoprotein p30 family.</text>
</comment>
<protein>
    <recommendedName>
        <fullName>Phosphoprotein p30</fullName>
        <shortName>p30</shortName>
    </recommendedName>
    <alternativeName>
        <fullName>Phosphoprotein p32</fullName>
        <shortName>p32</shortName>
    </alternativeName>
</protein>
<gene>
    <name type="ordered locus">Pret-105</name>
</gene>
<name>P30_ASFP4</name>
<organismHost>
    <name type="scientific">Ornithodoros</name>
    <name type="common">relapsing fever ticks</name>
    <dbReference type="NCBI Taxonomy" id="6937"/>
</organismHost>
<organismHost>
    <name type="scientific">Phacochoerus aethiopicus</name>
    <name type="common">Warthog</name>
    <dbReference type="NCBI Taxonomy" id="85517"/>
</organismHost>
<organismHost>
    <name type="scientific">Phacochoerus africanus</name>
    <name type="common">Warthog</name>
    <dbReference type="NCBI Taxonomy" id="41426"/>
</organismHost>
<organismHost>
    <name type="scientific">Potamochoerus larvatus</name>
    <name type="common">Bushpig</name>
    <dbReference type="NCBI Taxonomy" id="273792"/>
</organismHost>
<organismHost>
    <name type="scientific">Sus scrofa</name>
    <name type="common">Pig</name>
    <dbReference type="NCBI Taxonomy" id="9823"/>
</organismHost>
<accession>P0C9Z3</accession>